<evidence type="ECO:0000255" key="1">
    <source>
        <dbReference type="HAMAP-Rule" id="MF_01161"/>
    </source>
</evidence>
<accession>A6WY85</accession>
<comment type="function">
    <text evidence="1">Ligates lysine onto the cytidine present at position 34 of the AUA codon-specific tRNA(Ile) that contains the anticodon CAU, in an ATP-dependent manner. Cytidine is converted to lysidine, thus changing the amino acid specificity of the tRNA from methionine to isoleucine.</text>
</comment>
<comment type="catalytic activity">
    <reaction evidence="1">
        <text>cytidine(34) in tRNA(Ile2) + L-lysine + ATP = lysidine(34) in tRNA(Ile2) + AMP + diphosphate + H(+)</text>
        <dbReference type="Rhea" id="RHEA:43744"/>
        <dbReference type="Rhea" id="RHEA-COMP:10625"/>
        <dbReference type="Rhea" id="RHEA-COMP:10670"/>
        <dbReference type="ChEBI" id="CHEBI:15378"/>
        <dbReference type="ChEBI" id="CHEBI:30616"/>
        <dbReference type="ChEBI" id="CHEBI:32551"/>
        <dbReference type="ChEBI" id="CHEBI:33019"/>
        <dbReference type="ChEBI" id="CHEBI:82748"/>
        <dbReference type="ChEBI" id="CHEBI:83665"/>
        <dbReference type="ChEBI" id="CHEBI:456215"/>
        <dbReference type="EC" id="6.3.4.19"/>
    </reaction>
</comment>
<comment type="subcellular location">
    <subcellularLocation>
        <location evidence="1">Cytoplasm</location>
    </subcellularLocation>
</comment>
<comment type="domain">
    <text>The N-terminal region contains the highly conserved SGGXDS motif, predicted to be a P-loop motif involved in ATP binding.</text>
</comment>
<comment type="similarity">
    <text evidence="1">Belongs to the tRNA(Ile)-lysidine synthase family.</text>
</comment>
<reference key="1">
    <citation type="journal article" date="2011" name="J. Bacteriol.">
        <title>Genome of Ochrobactrum anthropi ATCC 49188 T, a versatile opportunistic pathogen and symbiont of several eukaryotic hosts.</title>
        <authorList>
            <person name="Chain P.S."/>
            <person name="Lang D.M."/>
            <person name="Comerci D.J."/>
            <person name="Malfatti S.A."/>
            <person name="Vergez L.M."/>
            <person name="Shin M."/>
            <person name="Ugalde R.A."/>
            <person name="Garcia E."/>
            <person name="Tolmasky M.E."/>
        </authorList>
    </citation>
    <scope>NUCLEOTIDE SEQUENCE [LARGE SCALE GENOMIC DNA]</scope>
    <source>
        <strain>ATCC 49188 / DSM 6882 / CCUG 24695 / JCM 21032 / LMG 3331 / NBRC 15819 / NCTC 12168 / Alc 37</strain>
    </source>
</reference>
<organism>
    <name type="scientific">Brucella anthropi (strain ATCC 49188 / DSM 6882 / CCUG 24695 / JCM 21032 / LMG 3331 / NBRC 15819 / NCTC 12168 / Alc 37)</name>
    <name type="common">Ochrobactrum anthropi</name>
    <dbReference type="NCBI Taxonomy" id="439375"/>
    <lineage>
        <taxon>Bacteria</taxon>
        <taxon>Pseudomonadati</taxon>
        <taxon>Pseudomonadota</taxon>
        <taxon>Alphaproteobacteria</taxon>
        <taxon>Hyphomicrobiales</taxon>
        <taxon>Brucellaceae</taxon>
        <taxon>Brucella/Ochrobactrum group</taxon>
        <taxon>Brucella</taxon>
    </lineage>
</organism>
<feature type="chain" id="PRO_1000065620" description="tRNA(Ile)-lysidine synthase">
    <location>
        <begin position="1"/>
        <end position="456"/>
    </location>
</feature>
<feature type="binding site" evidence="1">
    <location>
        <begin position="28"/>
        <end position="33"/>
    </location>
    <ligand>
        <name>ATP</name>
        <dbReference type="ChEBI" id="CHEBI:30616"/>
    </ligand>
</feature>
<dbReference type="EC" id="6.3.4.19" evidence="1"/>
<dbReference type="EMBL" id="CP000758">
    <property type="protein sequence ID" value="ABS13939.1"/>
    <property type="molecule type" value="Genomic_DNA"/>
</dbReference>
<dbReference type="RefSeq" id="WP_012091340.1">
    <property type="nucleotide sequence ID" value="NC_009667.1"/>
</dbReference>
<dbReference type="SMR" id="A6WY85"/>
<dbReference type="STRING" id="439375.Oant_1222"/>
<dbReference type="KEGG" id="oan:Oant_1222"/>
<dbReference type="PATRIC" id="fig|439375.7.peg.1277"/>
<dbReference type="eggNOG" id="COG0037">
    <property type="taxonomic scope" value="Bacteria"/>
</dbReference>
<dbReference type="HOGENOM" id="CLU_018869_3_3_5"/>
<dbReference type="PhylomeDB" id="A6WY85"/>
<dbReference type="Proteomes" id="UP000002301">
    <property type="component" value="Chromosome 1"/>
</dbReference>
<dbReference type="GO" id="GO:0005737">
    <property type="term" value="C:cytoplasm"/>
    <property type="evidence" value="ECO:0007669"/>
    <property type="project" value="UniProtKB-SubCell"/>
</dbReference>
<dbReference type="GO" id="GO:0005524">
    <property type="term" value="F:ATP binding"/>
    <property type="evidence" value="ECO:0007669"/>
    <property type="project" value="UniProtKB-UniRule"/>
</dbReference>
<dbReference type="GO" id="GO:0032267">
    <property type="term" value="F:tRNA(Ile)-lysidine synthase activity"/>
    <property type="evidence" value="ECO:0007669"/>
    <property type="project" value="UniProtKB-EC"/>
</dbReference>
<dbReference type="GO" id="GO:0006400">
    <property type="term" value="P:tRNA modification"/>
    <property type="evidence" value="ECO:0007669"/>
    <property type="project" value="UniProtKB-UniRule"/>
</dbReference>
<dbReference type="CDD" id="cd01992">
    <property type="entry name" value="TilS_N"/>
    <property type="match status" value="1"/>
</dbReference>
<dbReference type="Gene3D" id="3.40.50.620">
    <property type="entry name" value="HUPs"/>
    <property type="match status" value="1"/>
</dbReference>
<dbReference type="HAMAP" id="MF_01161">
    <property type="entry name" value="tRNA_Ile_lys_synt"/>
    <property type="match status" value="1"/>
</dbReference>
<dbReference type="InterPro" id="IPR014729">
    <property type="entry name" value="Rossmann-like_a/b/a_fold"/>
</dbReference>
<dbReference type="InterPro" id="IPR011063">
    <property type="entry name" value="TilS/TtcA_N"/>
</dbReference>
<dbReference type="InterPro" id="IPR012094">
    <property type="entry name" value="tRNA_Ile_lys_synt"/>
</dbReference>
<dbReference type="InterPro" id="IPR012795">
    <property type="entry name" value="tRNA_Ile_lys_synt_N"/>
</dbReference>
<dbReference type="NCBIfam" id="TIGR02432">
    <property type="entry name" value="lysidine_TilS_N"/>
    <property type="match status" value="1"/>
</dbReference>
<dbReference type="PANTHER" id="PTHR43033">
    <property type="entry name" value="TRNA(ILE)-LYSIDINE SYNTHASE-RELATED"/>
    <property type="match status" value="1"/>
</dbReference>
<dbReference type="PANTHER" id="PTHR43033:SF1">
    <property type="entry name" value="TRNA(ILE)-LYSIDINE SYNTHASE-RELATED"/>
    <property type="match status" value="1"/>
</dbReference>
<dbReference type="Pfam" id="PF01171">
    <property type="entry name" value="ATP_bind_3"/>
    <property type="match status" value="1"/>
</dbReference>
<dbReference type="SUPFAM" id="SSF52402">
    <property type="entry name" value="Adenine nucleotide alpha hydrolases-like"/>
    <property type="match status" value="1"/>
</dbReference>
<sequence>MGLSPSNISKLFEPFGFEQAKAVIAAVSGGSDSLGLLFLVRDYMAMLQNPPRLIAVTVDHQLRAESKAEAENVGLLCRQYGIEHRILVWDEAKPTSGLAAAARTARYRLLVQAARDVGGAFIVTGHTQDDQIETFLMRKERSAHAEARGLAAMSLRSLLDGLGLEGSVELDRPLLSVSRQTLRDELRGRGINWVDDPSNANTEYERPRIRHGIAAEADRQTVLDQIAEAGAARERDNAALIAALGNPASLRADANGALLVDPQLYAALPGNARRLFSGLLAAIAGGRRFLPGDSERSRIERVLSGDDDTHRLTVFGALIERGDSGSPHRFLREKRNLPKLHLEPGKPIVWDGRFRFLNEGMMDFELAAPGRQELADFLKSQNIEIESRKREALLVSPALYREGRLFALLFLQDGEFQQDIHIERHFAIFDHVLPGHDFDLARAVEARIGRICAEMS</sequence>
<proteinExistence type="inferred from homology"/>
<name>TILS_BRUA4</name>
<gene>
    <name evidence="1" type="primary">tilS</name>
    <name type="ordered locus">Oant_1222</name>
</gene>
<protein>
    <recommendedName>
        <fullName evidence="1">tRNA(Ile)-lysidine synthase</fullName>
        <ecNumber evidence="1">6.3.4.19</ecNumber>
    </recommendedName>
    <alternativeName>
        <fullName evidence="1">tRNA(Ile)-2-lysyl-cytidine synthase</fullName>
    </alternativeName>
    <alternativeName>
        <fullName evidence="1">tRNA(Ile)-lysidine synthetase</fullName>
    </alternativeName>
</protein>
<keyword id="KW-0067">ATP-binding</keyword>
<keyword id="KW-0963">Cytoplasm</keyword>
<keyword id="KW-0436">Ligase</keyword>
<keyword id="KW-0547">Nucleotide-binding</keyword>
<keyword id="KW-1185">Reference proteome</keyword>
<keyword id="KW-0819">tRNA processing</keyword>